<sequence>MQDKYSPSDVEQQAQQHWQALDAYRVTEHARAADGSDKPKFYACSMLPYPSGKLHMGHVRNYTINDVMTRQLRMKGYNVLMPMGWDAFGMPAENAALNNGVAPAAWTYDNIAYMKKQMQSMGLAIDWSREVATCSPDYYRWNQWLFLKMLEKGIAYRKTGTVNWDPVDQTVLANEQVIDGRGWRSGAVVEKREIPMYYLGITKYAQELLSDLDPLGWPERVKLMQQNWIGKSEGVRFAFPHNISGDDGKLINDGKLYVFTTRADTIMGVTFCAVAAEHPIATHAAQSNPALAAFIEECKHGSVMEADMATMEKKGMPTGLTVTHPLTGESVPVWVGNYVLMTYGDGAVMGVPAHDERDFAFANKYHLPIKQVIDVKGQSYDTTTWADWYGDKEHGVLFHSGKYDGLNYQQAVDAVAADLAAQGLGEKKTTWRLRDWGISRQRYWGTPIPLIHCESCGVVPVPEQDLPVRLPEDLVPDGTGNPLAKDPRFLNCTCPSCGKPARRETDTMDTFIDSCWYYMRYTCPDGETMVDARNDYWMPMDQYIGGIEHAILHLLYARFWTKVMRDLGLVKFDEPFTNLLTQGMVLNETYYREDASGKKQWINPADVDVQTDERGRPVGATLKADGQPVVIGGVEKMSKSKNNGIDPQALIDQYGADTARLFTMFAAPPEQQLEWNDAGVEGASRFLRRLWNFGVVHGDAIRGGHGNGVVAGATDADRALRRELYTVLKQANYDYERLQYNTVVSATMKMLNALEGAKDAGADARREGLGLLLRVLYPVVPHITHVLWTELGYAGAYGDLLDAPWPQVDEGALVQSEIELVLQVNGKVRGSIVVPADADRAAIEAIAAKDEAVQKFAEGKPPKKIIVVPGRLVNVVA</sequence>
<gene>
    <name evidence="1" type="primary">leuS</name>
    <name type="ordered locus">Rpic_2983</name>
</gene>
<accession>B2UCA1</accession>
<feature type="chain" id="PRO_1000091349" description="Leucine--tRNA ligase">
    <location>
        <begin position="1"/>
        <end position="877"/>
    </location>
</feature>
<feature type="short sequence motif" description="'HIGH' region">
    <location>
        <begin position="48"/>
        <end position="58"/>
    </location>
</feature>
<feature type="short sequence motif" description="'KMSKS' region">
    <location>
        <begin position="636"/>
        <end position="640"/>
    </location>
</feature>
<feature type="binding site" evidence="1">
    <location>
        <position position="639"/>
    </location>
    <ligand>
        <name>ATP</name>
        <dbReference type="ChEBI" id="CHEBI:30616"/>
    </ligand>
</feature>
<protein>
    <recommendedName>
        <fullName evidence="1">Leucine--tRNA ligase</fullName>
        <ecNumber evidence="1">6.1.1.4</ecNumber>
    </recommendedName>
    <alternativeName>
        <fullName evidence="1">Leucyl-tRNA synthetase</fullName>
        <shortName evidence="1">LeuRS</shortName>
    </alternativeName>
</protein>
<reference key="1">
    <citation type="submission" date="2008-05" db="EMBL/GenBank/DDBJ databases">
        <title>Complete sequence of chromosome 1 of Ralstonia pickettii 12J.</title>
        <authorList>
            <person name="Lucas S."/>
            <person name="Copeland A."/>
            <person name="Lapidus A."/>
            <person name="Glavina del Rio T."/>
            <person name="Dalin E."/>
            <person name="Tice H."/>
            <person name="Bruce D."/>
            <person name="Goodwin L."/>
            <person name="Pitluck S."/>
            <person name="Meincke L."/>
            <person name="Brettin T."/>
            <person name="Detter J.C."/>
            <person name="Han C."/>
            <person name="Kuske C.R."/>
            <person name="Schmutz J."/>
            <person name="Larimer F."/>
            <person name="Land M."/>
            <person name="Hauser L."/>
            <person name="Kyrpides N."/>
            <person name="Mikhailova N."/>
            <person name="Marsh T."/>
            <person name="Richardson P."/>
        </authorList>
    </citation>
    <scope>NUCLEOTIDE SEQUENCE [LARGE SCALE GENOMIC DNA]</scope>
    <source>
        <strain>12J</strain>
    </source>
</reference>
<comment type="catalytic activity">
    <reaction evidence="1">
        <text>tRNA(Leu) + L-leucine + ATP = L-leucyl-tRNA(Leu) + AMP + diphosphate</text>
        <dbReference type="Rhea" id="RHEA:11688"/>
        <dbReference type="Rhea" id="RHEA-COMP:9613"/>
        <dbReference type="Rhea" id="RHEA-COMP:9622"/>
        <dbReference type="ChEBI" id="CHEBI:30616"/>
        <dbReference type="ChEBI" id="CHEBI:33019"/>
        <dbReference type="ChEBI" id="CHEBI:57427"/>
        <dbReference type="ChEBI" id="CHEBI:78442"/>
        <dbReference type="ChEBI" id="CHEBI:78494"/>
        <dbReference type="ChEBI" id="CHEBI:456215"/>
        <dbReference type="EC" id="6.1.1.4"/>
    </reaction>
</comment>
<comment type="subcellular location">
    <subcellularLocation>
        <location evidence="1">Cytoplasm</location>
    </subcellularLocation>
</comment>
<comment type="similarity">
    <text evidence="1">Belongs to the class-I aminoacyl-tRNA synthetase family.</text>
</comment>
<keyword id="KW-0030">Aminoacyl-tRNA synthetase</keyword>
<keyword id="KW-0067">ATP-binding</keyword>
<keyword id="KW-0963">Cytoplasm</keyword>
<keyword id="KW-0436">Ligase</keyword>
<keyword id="KW-0547">Nucleotide-binding</keyword>
<keyword id="KW-0648">Protein biosynthesis</keyword>
<evidence type="ECO:0000255" key="1">
    <source>
        <dbReference type="HAMAP-Rule" id="MF_00049"/>
    </source>
</evidence>
<proteinExistence type="inferred from homology"/>
<organism>
    <name type="scientific">Ralstonia pickettii (strain 12J)</name>
    <dbReference type="NCBI Taxonomy" id="402626"/>
    <lineage>
        <taxon>Bacteria</taxon>
        <taxon>Pseudomonadati</taxon>
        <taxon>Pseudomonadota</taxon>
        <taxon>Betaproteobacteria</taxon>
        <taxon>Burkholderiales</taxon>
        <taxon>Burkholderiaceae</taxon>
        <taxon>Ralstonia</taxon>
    </lineage>
</organism>
<dbReference type="EC" id="6.1.1.4" evidence="1"/>
<dbReference type="EMBL" id="CP001068">
    <property type="protein sequence ID" value="ACD28106.1"/>
    <property type="molecule type" value="Genomic_DNA"/>
</dbReference>
<dbReference type="SMR" id="B2UCA1"/>
<dbReference type="STRING" id="402626.Rpic_2983"/>
<dbReference type="KEGG" id="rpi:Rpic_2983"/>
<dbReference type="PATRIC" id="fig|402626.5.peg.4119"/>
<dbReference type="eggNOG" id="COG0495">
    <property type="taxonomic scope" value="Bacteria"/>
</dbReference>
<dbReference type="HOGENOM" id="CLU_004427_0_0_4"/>
<dbReference type="GO" id="GO:0005829">
    <property type="term" value="C:cytosol"/>
    <property type="evidence" value="ECO:0007669"/>
    <property type="project" value="TreeGrafter"/>
</dbReference>
<dbReference type="GO" id="GO:0002161">
    <property type="term" value="F:aminoacyl-tRNA deacylase activity"/>
    <property type="evidence" value="ECO:0007669"/>
    <property type="project" value="InterPro"/>
</dbReference>
<dbReference type="GO" id="GO:0005524">
    <property type="term" value="F:ATP binding"/>
    <property type="evidence" value="ECO:0007669"/>
    <property type="project" value="UniProtKB-UniRule"/>
</dbReference>
<dbReference type="GO" id="GO:0004823">
    <property type="term" value="F:leucine-tRNA ligase activity"/>
    <property type="evidence" value="ECO:0007669"/>
    <property type="project" value="UniProtKB-UniRule"/>
</dbReference>
<dbReference type="GO" id="GO:0006429">
    <property type="term" value="P:leucyl-tRNA aminoacylation"/>
    <property type="evidence" value="ECO:0007669"/>
    <property type="project" value="UniProtKB-UniRule"/>
</dbReference>
<dbReference type="CDD" id="cd07958">
    <property type="entry name" value="Anticodon_Ia_Leu_BEm"/>
    <property type="match status" value="1"/>
</dbReference>
<dbReference type="CDD" id="cd00812">
    <property type="entry name" value="LeuRS_core"/>
    <property type="match status" value="1"/>
</dbReference>
<dbReference type="FunFam" id="1.10.730.10:FF:000002">
    <property type="entry name" value="Leucine--tRNA ligase"/>
    <property type="match status" value="1"/>
</dbReference>
<dbReference type="FunFam" id="2.20.28.290:FF:000001">
    <property type="entry name" value="Leucine--tRNA ligase"/>
    <property type="match status" value="1"/>
</dbReference>
<dbReference type="FunFam" id="3.10.20.590:FF:000001">
    <property type="entry name" value="Leucine--tRNA ligase"/>
    <property type="match status" value="1"/>
</dbReference>
<dbReference type="FunFam" id="3.40.50.620:FF:000003">
    <property type="entry name" value="Leucine--tRNA ligase"/>
    <property type="match status" value="1"/>
</dbReference>
<dbReference type="FunFam" id="3.40.50.620:FF:000056">
    <property type="entry name" value="Leucine--tRNA ligase"/>
    <property type="match status" value="1"/>
</dbReference>
<dbReference type="FunFam" id="3.90.740.10:FF:000012">
    <property type="entry name" value="Leucine--tRNA ligase"/>
    <property type="match status" value="1"/>
</dbReference>
<dbReference type="Gene3D" id="2.20.28.290">
    <property type="match status" value="1"/>
</dbReference>
<dbReference type="Gene3D" id="3.10.20.590">
    <property type="match status" value="1"/>
</dbReference>
<dbReference type="Gene3D" id="3.40.50.620">
    <property type="entry name" value="HUPs"/>
    <property type="match status" value="2"/>
</dbReference>
<dbReference type="Gene3D" id="1.10.730.10">
    <property type="entry name" value="Isoleucyl-tRNA Synthetase, Domain 1"/>
    <property type="match status" value="1"/>
</dbReference>
<dbReference type="Gene3D" id="3.90.740.10">
    <property type="entry name" value="Valyl/Leucyl/Isoleucyl-tRNA synthetase, editing domain"/>
    <property type="match status" value="1"/>
</dbReference>
<dbReference type="HAMAP" id="MF_00049_B">
    <property type="entry name" value="Leu_tRNA_synth_B"/>
    <property type="match status" value="1"/>
</dbReference>
<dbReference type="InterPro" id="IPR001412">
    <property type="entry name" value="aa-tRNA-synth_I_CS"/>
</dbReference>
<dbReference type="InterPro" id="IPR002300">
    <property type="entry name" value="aa-tRNA-synth_Ia"/>
</dbReference>
<dbReference type="InterPro" id="IPR002302">
    <property type="entry name" value="Leu-tRNA-ligase"/>
</dbReference>
<dbReference type="InterPro" id="IPR025709">
    <property type="entry name" value="Leu_tRNA-synth_edit"/>
</dbReference>
<dbReference type="InterPro" id="IPR013155">
    <property type="entry name" value="M/V/L/I-tRNA-synth_anticd-bd"/>
</dbReference>
<dbReference type="InterPro" id="IPR014729">
    <property type="entry name" value="Rossmann-like_a/b/a_fold"/>
</dbReference>
<dbReference type="InterPro" id="IPR009080">
    <property type="entry name" value="tRNAsynth_Ia_anticodon-bd"/>
</dbReference>
<dbReference type="InterPro" id="IPR009008">
    <property type="entry name" value="Val/Leu/Ile-tRNA-synth_edit"/>
</dbReference>
<dbReference type="NCBIfam" id="TIGR00396">
    <property type="entry name" value="leuS_bact"/>
    <property type="match status" value="1"/>
</dbReference>
<dbReference type="PANTHER" id="PTHR43740:SF2">
    <property type="entry name" value="LEUCINE--TRNA LIGASE, MITOCHONDRIAL"/>
    <property type="match status" value="1"/>
</dbReference>
<dbReference type="PANTHER" id="PTHR43740">
    <property type="entry name" value="LEUCYL-TRNA SYNTHETASE"/>
    <property type="match status" value="1"/>
</dbReference>
<dbReference type="Pfam" id="PF08264">
    <property type="entry name" value="Anticodon_1"/>
    <property type="match status" value="1"/>
</dbReference>
<dbReference type="Pfam" id="PF00133">
    <property type="entry name" value="tRNA-synt_1"/>
    <property type="match status" value="3"/>
</dbReference>
<dbReference type="Pfam" id="PF13603">
    <property type="entry name" value="tRNA-synt_1_2"/>
    <property type="match status" value="1"/>
</dbReference>
<dbReference type="PRINTS" id="PR00985">
    <property type="entry name" value="TRNASYNTHLEU"/>
</dbReference>
<dbReference type="SUPFAM" id="SSF47323">
    <property type="entry name" value="Anticodon-binding domain of a subclass of class I aminoacyl-tRNA synthetases"/>
    <property type="match status" value="1"/>
</dbReference>
<dbReference type="SUPFAM" id="SSF52374">
    <property type="entry name" value="Nucleotidylyl transferase"/>
    <property type="match status" value="1"/>
</dbReference>
<dbReference type="SUPFAM" id="SSF50677">
    <property type="entry name" value="ValRS/IleRS/LeuRS editing domain"/>
    <property type="match status" value="1"/>
</dbReference>
<dbReference type="PROSITE" id="PS00178">
    <property type="entry name" value="AA_TRNA_LIGASE_I"/>
    <property type="match status" value="1"/>
</dbReference>
<name>SYL_RALPJ</name>